<protein>
    <recommendedName>
        <fullName evidence="1">N-acetylglucosamine-6-phosphate deacetylase</fullName>
        <shortName evidence="1">GlcNAc 6-P deacetylase</shortName>
        <ecNumber evidence="2">3.5.1.25</ecNumber>
    </recommendedName>
</protein>
<feature type="chain" id="PRO_0000170919" description="N-acetylglucosamine-6-phosphate deacetylase">
    <location>
        <begin position="1"/>
        <end position="399"/>
    </location>
</feature>
<feature type="active site" description="Proton donor/acceptor" evidence="1">
    <location>
        <position position="279"/>
    </location>
</feature>
<feature type="binding site" evidence="1">
    <location>
        <position position="65"/>
    </location>
    <ligand>
        <name>a divalent metal cation</name>
        <dbReference type="ChEBI" id="CHEBI:60240"/>
        <label>1</label>
    </ligand>
</feature>
<feature type="binding site" evidence="1">
    <location>
        <position position="67"/>
    </location>
    <ligand>
        <name>a divalent metal cation</name>
        <dbReference type="ChEBI" id="CHEBI:60240"/>
        <label>1</label>
    </ligand>
</feature>
<feature type="binding site" evidence="1">
    <location>
        <position position="135"/>
    </location>
    <ligand>
        <name>a divalent metal cation</name>
        <dbReference type="ChEBI" id="CHEBI:60240"/>
        <label>1</label>
    </ligand>
</feature>
<feature type="binding site" evidence="1">
    <location>
        <position position="135"/>
    </location>
    <ligand>
        <name>a divalent metal cation</name>
        <dbReference type="ChEBI" id="CHEBI:60240"/>
        <label>2</label>
    </ligand>
</feature>
<feature type="binding site" evidence="1">
    <location>
        <begin position="146"/>
        <end position="147"/>
    </location>
    <ligand>
        <name>substrate</name>
    </ligand>
</feature>
<feature type="binding site" evidence="1">
    <location>
        <position position="201"/>
    </location>
    <ligand>
        <name>a divalent metal cation</name>
        <dbReference type="ChEBI" id="CHEBI:60240"/>
        <label>2</label>
    </ligand>
</feature>
<feature type="binding site" evidence="1">
    <location>
        <position position="222"/>
    </location>
    <ligand>
        <name>a divalent metal cation</name>
        <dbReference type="ChEBI" id="CHEBI:60240"/>
        <label>2</label>
    </ligand>
</feature>
<feature type="binding site" evidence="1">
    <location>
        <begin position="225"/>
        <end position="226"/>
    </location>
    <ligand>
        <name>substrate</name>
    </ligand>
</feature>
<feature type="binding site" evidence="2">
    <location>
        <position position="233"/>
    </location>
    <ligand>
        <name>substrate</name>
    </ligand>
</feature>
<feature type="binding site" evidence="1">
    <location>
        <begin position="254"/>
        <end position="257"/>
    </location>
    <ligand>
        <name>substrate</name>
    </ligand>
</feature>
<feature type="binding site" evidence="1">
    <location>
        <position position="279"/>
    </location>
    <ligand>
        <name>a divalent metal cation</name>
        <dbReference type="ChEBI" id="CHEBI:60240"/>
        <label>1</label>
    </ligand>
</feature>
<feature type="binding site" evidence="1">
    <location>
        <begin position="312"/>
        <end position="314"/>
    </location>
    <ligand>
        <name>substrate</name>
    </ligand>
</feature>
<proteinExistence type="inferred from homology"/>
<comment type="function">
    <text evidence="1">Involved in the first committed step in the biosynthesis of amino-sugar-nucleotides. Catalyzes the hydrolysis of the N-acetyl group of N-acetylglucosamine-6-phosphate (GlcNAc-6-P) to yield glucosamine 6-phosphate and acetate.</text>
</comment>
<comment type="catalytic activity">
    <reaction evidence="2">
        <text>N-acetyl-D-glucosamine 6-phosphate + H2O = D-glucosamine 6-phosphate + acetate</text>
        <dbReference type="Rhea" id="RHEA:22936"/>
        <dbReference type="ChEBI" id="CHEBI:15377"/>
        <dbReference type="ChEBI" id="CHEBI:30089"/>
        <dbReference type="ChEBI" id="CHEBI:57513"/>
        <dbReference type="ChEBI" id="CHEBI:58725"/>
        <dbReference type="EC" id="3.5.1.25"/>
    </reaction>
</comment>
<comment type="cofactor">
    <cofactor evidence="1">
        <name>a divalent metal cation</name>
        <dbReference type="ChEBI" id="CHEBI:60240"/>
    </cofactor>
    <text evidence="1">Binds 2 divalent metal cations per subunit.</text>
</comment>
<comment type="pathway">
    <text>Amino-sugar metabolism; N-acetylneuraminate degradation; D-fructose 6-phosphate from N-acetylneuraminate: step 4/5.</text>
</comment>
<comment type="subunit">
    <text evidence="1">Homodimer.</text>
</comment>
<comment type="similarity">
    <text evidence="3">Belongs to the metallo-dependent hydrolases superfamily. NagA family.</text>
</comment>
<reference key="1">
    <citation type="journal article" date="1996" name="J. Biol. Chem.">
        <title>Sugar transport by the marine chitinolytic bacterium Vibrio furnissii. Molecular cloning and analysis of the mannose/glucose permease.</title>
        <authorList>
            <person name="Bouma C.L."/>
            <person name="Roseman S."/>
        </authorList>
    </citation>
    <scope>NUCLEOTIDE SEQUENCE [GENOMIC DNA]</scope>
    <source>
        <strain>SR1514</strain>
    </source>
</reference>
<name>NAGA_VIBFU</name>
<evidence type="ECO:0000250" key="1">
    <source>
        <dbReference type="UniProtKB" id="O34450"/>
    </source>
</evidence>
<evidence type="ECO:0000250" key="2">
    <source>
        <dbReference type="UniProtKB" id="P0AF18"/>
    </source>
</evidence>
<evidence type="ECO:0000305" key="3"/>
<sequence length="399" mass="43122">MESKSHAHCFRAQRVLHGKQWQQDAVVTVDENGTISAIESYDGQRHADAIPLGPVDLMPGLIDSHVHGSQGCDVMDATHDSLNTMSRYFATLGVTAFVATTVTAPVAKIRAALAQVAKSKHDGVDGAEILGAYLEGPYFTEKNKGAHPTQWFRELAVEELEDWISYSDNQLLKVALAPEKTGALDAIRYLDAHGIHVMLGHSDADYEQVKAALAAGAKGIVHCYNGMRGLHHRDPGVVGAGLLHPHCFVEMIADGHHVHPAAIDVAHRCCGSRMTLITDAMRATGMPDGQYTLGEYQVDMKQGVVMTSSGGLAGSTLTLLRGVKNIHRWLNVPIEQAWLMASYTPAESLGIQHQLGSLEVGKYASMVAVSSDFSIEKTWVKGRLVFDAATSPRQEALCI</sequence>
<dbReference type="EC" id="3.5.1.25" evidence="2"/>
<dbReference type="EMBL" id="U65015">
    <property type="protein sequence ID" value="AAC44683.1"/>
    <property type="molecule type" value="Genomic_DNA"/>
</dbReference>
<dbReference type="SMR" id="P96166"/>
<dbReference type="UniPathway" id="UPA00629">
    <property type="reaction ID" value="UER00683"/>
</dbReference>
<dbReference type="GO" id="GO:0005506">
    <property type="term" value="F:iron ion binding"/>
    <property type="evidence" value="ECO:0000250"/>
    <property type="project" value="UniProtKB"/>
</dbReference>
<dbReference type="GO" id="GO:0008448">
    <property type="term" value="F:N-acetylglucosamine-6-phosphate deacetylase activity"/>
    <property type="evidence" value="ECO:0000250"/>
    <property type="project" value="UniProtKB"/>
</dbReference>
<dbReference type="GO" id="GO:0042803">
    <property type="term" value="F:protein homodimerization activity"/>
    <property type="evidence" value="ECO:0000250"/>
    <property type="project" value="UniProtKB"/>
</dbReference>
<dbReference type="GO" id="GO:0006046">
    <property type="term" value="P:N-acetylglucosamine catabolic process"/>
    <property type="evidence" value="ECO:0000250"/>
    <property type="project" value="UniProtKB"/>
</dbReference>
<dbReference type="GO" id="GO:0019262">
    <property type="term" value="P:N-acetylneuraminate catabolic process"/>
    <property type="evidence" value="ECO:0007669"/>
    <property type="project" value="UniProtKB-UniPathway"/>
</dbReference>
<dbReference type="CDD" id="cd00854">
    <property type="entry name" value="NagA"/>
    <property type="match status" value="1"/>
</dbReference>
<dbReference type="FunFam" id="3.20.20.140:FF:000004">
    <property type="entry name" value="N-acetylglucosamine-6-phosphate deacetylase"/>
    <property type="match status" value="1"/>
</dbReference>
<dbReference type="Gene3D" id="3.20.20.140">
    <property type="entry name" value="Metal-dependent hydrolases"/>
    <property type="match status" value="1"/>
</dbReference>
<dbReference type="Gene3D" id="2.30.40.10">
    <property type="entry name" value="Urease, subunit C, domain 1"/>
    <property type="match status" value="1"/>
</dbReference>
<dbReference type="InterPro" id="IPR006680">
    <property type="entry name" value="Amidohydro-rel"/>
</dbReference>
<dbReference type="InterPro" id="IPR003764">
    <property type="entry name" value="GlcNAc_6-P_deAcase"/>
</dbReference>
<dbReference type="InterPro" id="IPR011059">
    <property type="entry name" value="Metal-dep_hydrolase_composite"/>
</dbReference>
<dbReference type="InterPro" id="IPR032466">
    <property type="entry name" value="Metal_Hydrolase"/>
</dbReference>
<dbReference type="NCBIfam" id="TIGR00221">
    <property type="entry name" value="nagA"/>
    <property type="match status" value="1"/>
</dbReference>
<dbReference type="PANTHER" id="PTHR11113">
    <property type="entry name" value="N-ACETYLGLUCOSAMINE-6-PHOSPHATE DEACETYLASE"/>
    <property type="match status" value="1"/>
</dbReference>
<dbReference type="PANTHER" id="PTHR11113:SF14">
    <property type="entry name" value="N-ACETYLGLUCOSAMINE-6-PHOSPHATE DEACETYLASE"/>
    <property type="match status" value="1"/>
</dbReference>
<dbReference type="Pfam" id="PF01979">
    <property type="entry name" value="Amidohydro_1"/>
    <property type="match status" value="1"/>
</dbReference>
<dbReference type="PIRSF" id="PIRSF038994">
    <property type="entry name" value="NagA"/>
    <property type="match status" value="1"/>
</dbReference>
<dbReference type="SUPFAM" id="SSF51338">
    <property type="entry name" value="Composite domain of metallo-dependent hydrolases"/>
    <property type="match status" value="1"/>
</dbReference>
<dbReference type="SUPFAM" id="SSF51556">
    <property type="entry name" value="Metallo-dependent hydrolases"/>
    <property type="match status" value="1"/>
</dbReference>
<accession>P96166</accession>
<keyword id="KW-0119">Carbohydrate metabolism</keyword>
<keyword id="KW-0378">Hydrolase</keyword>
<keyword id="KW-0479">Metal-binding</keyword>
<organism>
    <name type="scientific">Vibrio furnissii</name>
    <dbReference type="NCBI Taxonomy" id="29494"/>
    <lineage>
        <taxon>Bacteria</taxon>
        <taxon>Pseudomonadati</taxon>
        <taxon>Pseudomonadota</taxon>
        <taxon>Gammaproteobacteria</taxon>
        <taxon>Vibrionales</taxon>
        <taxon>Vibrionaceae</taxon>
        <taxon>Vibrio</taxon>
    </lineage>
</organism>
<gene>
    <name type="primary">manD</name>
</gene>